<organism>
    <name type="scientific">Escherichia coli O1:K1 / APEC</name>
    <dbReference type="NCBI Taxonomy" id="405955"/>
    <lineage>
        <taxon>Bacteria</taxon>
        <taxon>Pseudomonadati</taxon>
        <taxon>Pseudomonadota</taxon>
        <taxon>Gammaproteobacteria</taxon>
        <taxon>Enterobacterales</taxon>
        <taxon>Enterobacteriaceae</taxon>
        <taxon>Escherichia</taxon>
    </lineage>
</organism>
<proteinExistence type="inferred from homology"/>
<reference key="1">
    <citation type="journal article" date="2007" name="J. Bacteriol.">
        <title>The genome sequence of avian pathogenic Escherichia coli strain O1:K1:H7 shares strong similarities with human extraintestinal pathogenic E. coli genomes.</title>
        <authorList>
            <person name="Johnson T.J."/>
            <person name="Kariyawasam S."/>
            <person name="Wannemuehler Y."/>
            <person name="Mangiamele P."/>
            <person name="Johnson S.J."/>
            <person name="Doetkott C."/>
            <person name="Skyberg J.A."/>
            <person name="Lynne A.M."/>
            <person name="Johnson J.R."/>
            <person name="Nolan L.K."/>
        </authorList>
    </citation>
    <scope>NUCLEOTIDE SEQUENCE [LARGE SCALE GENOMIC DNA]</scope>
</reference>
<name>NUOB_ECOK1</name>
<feature type="chain" id="PRO_0000376216" description="NADH-quinone oxidoreductase subunit B">
    <location>
        <begin position="1"/>
        <end position="220"/>
    </location>
</feature>
<feature type="binding site" evidence="1">
    <location>
        <position position="63"/>
    </location>
    <ligand>
        <name>[4Fe-4S] cluster</name>
        <dbReference type="ChEBI" id="CHEBI:49883"/>
    </ligand>
</feature>
<feature type="binding site" evidence="1">
    <location>
        <position position="64"/>
    </location>
    <ligand>
        <name>[4Fe-4S] cluster</name>
        <dbReference type="ChEBI" id="CHEBI:49883"/>
    </ligand>
</feature>
<feature type="binding site" evidence="1">
    <location>
        <position position="129"/>
    </location>
    <ligand>
        <name>[4Fe-4S] cluster</name>
        <dbReference type="ChEBI" id="CHEBI:49883"/>
    </ligand>
</feature>
<feature type="binding site" evidence="1">
    <location>
        <position position="158"/>
    </location>
    <ligand>
        <name>[4Fe-4S] cluster</name>
        <dbReference type="ChEBI" id="CHEBI:49883"/>
    </ligand>
</feature>
<protein>
    <recommendedName>
        <fullName evidence="1">NADH-quinone oxidoreductase subunit B</fullName>
        <ecNumber evidence="1">7.1.1.-</ecNumber>
    </recommendedName>
    <alternativeName>
        <fullName evidence="1">NADH dehydrogenase I subunit B</fullName>
    </alternativeName>
    <alternativeName>
        <fullName evidence="1">NDH-1 subunit B</fullName>
    </alternativeName>
</protein>
<dbReference type="EC" id="7.1.1.-" evidence="1"/>
<dbReference type="EMBL" id="CP000468">
    <property type="protein sequence ID" value="ABJ01675.1"/>
    <property type="molecule type" value="Genomic_DNA"/>
</dbReference>
<dbReference type="RefSeq" id="WP_000386733.1">
    <property type="nucleotide sequence ID" value="NZ_CADILS010000025.1"/>
</dbReference>
<dbReference type="SMR" id="A1ADD5"/>
<dbReference type="GeneID" id="93774887"/>
<dbReference type="KEGG" id="ecv:APECO1_4278"/>
<dbReference type="HOGENOM" id="CLU_055737_7_3_6"/>
<dbReference type="Proteomes" id="UP000008216">
    <property type="component" value="Chromosome"/>
</dbReference>
<dbReference type="GO" id="GO:0005886">
    <property type="term" value="C:plasma membrane"/>
    <property type="evidence" value="ECO:0007669"/>
    <property type="project" value="UniProtKB-SubCell"/>
</dbReference>
<dbReference type="GO" id="GO:0045271">
    <property type="term" value="C:respiratory chain complex I"/>
    <property type="evidence" value="ECO:0007669"/>
    <property type="project" value="TreeGrafter"/>
</dbReference>
<dbReference type="GO" id="GO:0051539">
    <property type="term" value="F:4 iron, 4 sulfur cluster binding"/>
    <property type="evidence" value="ECO:0007669"/>
    <property type="project" value="UniProtKB-KW"/>
</dbReference>
<dbReference type="GO" id="GO:0005506">
    <property type="term" value="F:iron ion binding"/>
    <property type="evidence" value="ECO:0007669"/>
    <property type="project" value="UniProtKB-UniRule"/>
</dbReference>
<dbReference type="GO" id="GO:0008137">
    <property type="term" value="F:NADH dehydrogenase (ubiquinone) activity"/>
    <property type="evidence" value="ECO:0007669"/>
    <property type="project" value="InterPro"/>
</dbReference>
<dbReference type="GO" id="GO:0050136">
    <property type="term" value="F:NADH:ubiquinone reductase (non-electrogenic) activity"/>
    <property type="evidence" value="ECO:0007669"/>
    <property type="project" value="UniProtKB-UniRule"/>
</dbReference>
<dbReference type="GO" id="GO:0048038">
    <property type="term" value="F:quinone binding"/>
    <property type="evidence" value="ECO:0007669"/>
    <property type="project" value="UniProtKB-KW"/>
</dbReference>
<dbReference type="GO" id="GO:0009060">
    <property type="term" value="P:aerobic respiration"/>
    <property type="evidence" value="ECO:0007669"/>
    <property type="project" value="TreeGrafter"/>
</dbReference>
<dbReference type="GO" id="GO:0015990">
    <property type="term" value="P:electron transport coupled proton transport"/>
    <property type="evidence" value="ECO:0007669"/>
    <property type="project" value="TreeGrafter"/>
</dbReference>
<dbReference type="FunFam" id="3.40.50.12280:FF:000002">
    <property type="entry name" value="NADH-quinone oxidoreductase subunit B"/>
    <property type="match status" value="1"/>
</dbReference>
<dbReference type="Gene3D" id="3.40.50.12280">
    <property type="match status" value="1"/>
</dbReference>
<dbReference type="HAMAP" id="MF_01356">
    <property type="entry name" value="NDH1_NuoB"/>
    <property type="match status" value="1"/>
</dbReference>
<dbReference type="InterPro" id="IPR006137">
    <property type="entry name" value="NADH_UbQ_OxRdtase-like_20kDa"/>
</dbReference>
<dbReference type="InterPro" id="IPR006138">
    <property type="entry name" value="NADH_UQ_OxRdtase_20Kd_su"/>
</dbReference>
<dbReference type="NCBIfam" id="TIGR01957">
    <property type="entry name" value="nuoB_fam"/>
    <property type="match status" value="1"/>
</dbReference>
<dbReference type="NCBIfam" id="NF005012">
    <property type="entry name" value="PRK06411.1"/>
    <property type="match status" value="1"/>
</dbReference>
<dbReference type="PANTHER" id="PTHR11995">
    <property type="entry name" value="NADH DEHYDROGENASE"/>
    <property type="match status" value="1"/>
</dbReference>
<dbReference type="PANTHER" id="PTHR11995:SF14">
    <property type="entry name" value="NADH DEHYDROGENASE [UBIQUINONE] IRON-SULFUR PROTEIN 7, MITOCHONDRIAL"/>
    <property type="match status" value="1"/>
</dbReference>
<dbReference type="Pfam" id="PF01058">
    <property type="entry name" value="Oxidored_q6"/>
    <property type="match status" value="1"/>
</dbReference>
<dbReference type="SUPFAM" id="SSF56770">
    <property type="entry name" value="HydA/Nqo6-like"/>
    <property type="match status" value="1"/>
</dbReference>
<dbReference type="PROSITE" id="PS01150">
    <property type="entry name" value="COMPLEX1_20K"/>
    <property type="match status" value="1"/>
</dbReference>
<gene>
    <name evidence="1" type="primary">nuoB</name>
    <name type="ordered locus">Ecok1_21810</name>
    <name type="ORF">APECO1_4278</name>
</gene>
<comment type="function">
    <text evidence="1">NDH-1 shuttles electrons from NADH, via FMN and iron-sulfur (Fe-S) centers, to quinones in the respiratory chain. The immediate electron acceptor for the enzyme in this species is believed to be ubiquinone. Couples the redox reaction to proton translocation (for every two electrons transferred, four hydrogen ions are translocated across the cytoplasmic membrane), and thus conserves the redox energy in a proton gradient.</text>
</comment>
<comment type="catalytic activity">
    <reaction evidence="1">
        <text>a quinone + NADH + 5 H(+)(in) = a quinol + NAD(+) + 4 H(+)(out)</text>
        <dbReference type="Rhea" id="RHEA:57888"/>
        <dbReference type="ChEBI" id="CHEBI:15378"/>
        <dbReference type="ChEBI" id="CHEBI:24646"/>
        <dbReference type="ChEBI" id="CHEBI:57540"/>
        <dbReference type="ChEBI" id="CHEBI:57945"/>
        <dbReference type="ChEBI" id="CHEBI:132124"/>
    </reaction>
</comment>
<comment type="cofactor">
    <cofactor evidence="1">
        <name>[4Fe-4S] cluster</name>
        <dbReference type="ChEBI" id="CHEBI:49883"/>
    </cofactor>
    <text evidence="1">Binds 1 [4Fe-4S] cluster.</text>
</comment>
<comment type="subunit">
    <text evidence="1">NDH-1 is composed of 13 different subunits. Subunits NuoB, CD, E, F, and G constitute the peripheral sector of the complex.</text>
</comment>
<comment type="subcellular location">
    <subcellularLocation>
        <location evidence="1">Cell inner membrane</location>
        <topology evidence="1">Peripheral membrane protein</topology>
        <orientation evidence="1">Cytoplasmic side</orientation>
    </subcellularLocation>
</comment>
<comment type="similarity">
    <text evidence="1">Belongs to the complex I 20 kDa subunit family.</text>
</comment>
<accession>A1ADD5</accession>
<keyword id="KW-0004">4Fe-4S</keyword>
<keyword id="KW-0997">Cell inner membrane</keyword>
<keyword id="KW-1003">Cell membrane</keyword>
<keyword id="KW-0408">Iron</keyword>
<keyword id="KW-0411">Iron-sulfur</keyword>
<keyword id="KW-0472">Membrane</keyword>
<keyword id="KW-0479">Metal-binding</keyword>
<keyword id="KW-0520">NAD</keyword>
<keyword id="KW-0874">Quinone</keyword>
<keyword id="KW-1185">Reference proteome</keyword>
<keyword id="KW-1278">Translocase</keyword>
<keyword id="KW-0813">Transport</keyword>
<keyword id="KW-0830">Ubiquinone</keyword>
<evidence type="ECO:0000255" key="1">
    <source>
        <dbReference type="HAMAP-Rule" id="MF_01356"/>
    </source>
</evidence>
<sequence length="220" mass="25056">MDYTLTRIDPNGENDRYPLQKQEIVTDPLEQEVNKNVFMGKLNDMVNWGRKNSIWPYNFGLSCCYVEMVTSFTAVHDVARFGAEVLRASPRQADLMVVAGTCFTKMAPVIQRLYDQMLEPKWVISMGACANSGGMYDIYSVVQGVDKFIPVDVYIPGCPPRPEAYMQALMLLQESIGKERRPLSWVVGDQGVYRANMQSERERKRGERIAVTNLRTPDEI</sequence>